<evidence type="ECO:0000250" key="1"/>
<evidence type="ECO:0000305" key="2"/>
<protein>
    <recommendedName>
        <fullName>Protein AV2</fullName>
    </recommendedName>
</protein>
<name>AV2_ICMV</name>
<dbReference type="EMBL" id="Z24758">
    <property type="protein sequence ID" value="CAA80884.1"/>
    <property type="molecule type" value="Genomic_DNA"/>
</dbReference>
<dbReference type="PIR" id="S35880">
    <property type="entry name" value="S35880"/>
</dbReference>
<dbReference type="RefSeq" id="NP_047227.1">
    <property type="nucleotide sequence ID" value="NC_001932.1"/>
</dbReference>
<dbReference type="KEGG" id="vg:991055"/>
<dbReference type="OrthoDB" id="14447at10239"/>
<dbReference type="Proteomes" id="UP000007210">
    <property type="component" value="Genome"/>
</dbReference>
<dbReference type="GO" id="GO:0044220">
    <property type="term" value="C:host cell perinuclear region of cytoplasm"/>
    <property type="evidence" value="ECO:0007669"/>
    <property type="project" value="UniProtKB-SubCell"/>
</dbReference>
<dbReference type="GO" id="GO:0060967">
    <property type="term" value="P:negative regulation of gene silencing by regulatory ncRNA"/>
    <property type="evidence" value="ECO:0007669"/>
    <property type="project" value="InterPro"/>
</dbReference>
<dbReference type="GO" id="GO:0052170">
    <property type="term" value="P:symbiont-mediated suppression of host innate immune response"/>
    <property type="evidence" value="ECO:0007669"/>
    <property type="project" value="UniProtKB-KW"/>
</dbReference>
<dbReference type="InterPro" id="IPR002511">
    <property type="entry name" value="Gemini_V2"/>
</dbReference>
<dbReference type="InterPro" id="IPR005159">
    <property type="entry name" value="WCCH"/>
</dbReference>
<dbReference type="Pfam" id="PF01524">
    <property type="entry name" value="Gemini_V2"/>
    <property type="match status" value="1"/>
</dbReference>
<dbReference type="Pfam" id="PF03716">
    <property type="entry name" value="WCCH"/>
    <property type="match status" value="1"/>
</dbReference>
<organism>
    <name type="scientific">Indian cassava mosaic virus</name>
    <name type="common">ICMV</name>
    <dbReference type="NCBI Taxonomy" id="31600"/>
    <lineage>
        <taxon>Viruses</taxon>
        <taxon>Monodnaviria</taxon>
        <taxon>Shotokuvirae</taxon>
        <taxon>Cressdnaviricota</taxon>
        <taxon>Repensiviricetes</taxon>
        <taxon>Geplafuvirales</taxon>
        <taxon>Geminiviridae</taxon>
        <taxon>Begomovirus</taxon>
    </lineage>
</organism>
<proteinExistence type="inferred from homology"/>
<feature type="chain" id="PRO_0000222273" description="Protein AV2">
    <location>
        <begin position="1"/>
        <end position="112"/>
    </location>
</feature>
<reference key="1">
    <citation type="journal article" date="1993" name="J. Gen. Virol.">
        <title>Nucleotide sequence evidence for the occurrence of three distinct whitefly-transmitted geminiviruses in cassava.</title>
        <authorList>
            <person name="Hong Y.G."/>
            <person name="Robinson D.J."/>
            <person name="Harrison B.D."/>
        </authorList>
    </citation>
    <scope>NUCLEOTIDE SEQUENCE [GENOMIC DNA]</scope>
</reference>
<accession>Q08593</accession>
<keyword id="KW-1035">Host cytoplasm</keyword>
<keyword id="KW-0945">Host-virus interaction</keyword>
<keyword id="KW-1090">Inhibition of host innate immune response by virus</keyword>
<keyword id="KW-0941">Suppressor of RNA silencing</keyword>
<keyword id="KW-0899">Viral immunoevasion</keyword>
<gene>
    <name type="ORF">AV2</name>
</gene>
<sequence length="112" mass="12986">MWDPLLNEFPESVHGFRCMLAVKYLQLVECTYSPDTLGYDLIRDLFSVIRAKNYVEATSRYHNFYSRLEGSSPSELRQPIQQPCGCPYCPRHKKTILDKQTHQSEAQVVSDV</sequence>
<organismHost>
    <name type="scientific">Manihot esculenta</name>
    <name type="common">Cassava</name>
    <name type="synonym">Jatropha manihot</name>
    <dbReference type="NCBI Taxonomy" id="3983"/>
</organismHost>
<comment type="function">
    <text evidence="1">Through its interaction with host SGS3, acts as a suppressor of RNA-mediated gene silencing, also known as post-transcriptional gene silencing (PTGS), a mechanism of plant viral defense that limits the accumulation of viral RNAs.</text>
</comment>
<comment type="subunit">
    <text evidence="1">Interacts with host SGS3.</text>
</comment>
<comment type="subcellular location">
    <subcellularLocation>
        <location evidence="1">Host cytoplasm</location>
        <location evidence="1">Host perinuclear region</location>
    </subcellularLocation>
    <text evidence="1">Accumulates in inclusion bodies in the cell periphery. May interact with the ER network from the perinuclear region out to the cell periphery (By similarity).</text>
</comment>
<comment type="similarity">
    <text evidence="2">Belongs to the geminiviridae protein AV2/V2 family.</text>
</comment>